<accession>P85773</accession>
<organism>
    <name type="scientific">Shelfordella lateralis</name>
    <name type="common">Turkestan cockroach</name>
    <name type="synonym">Periplaneta lateralis</name>
    <dbReference type="NCBI Taxonomy" id="36981"/>
    <lineage>
        <taxon>Eukaryota</taxon>
        <taxon>Metazoa</taxon>
        <taxon>Ecdysozoa</taxon>
        <taxon>Arthropoda</taxon>
        <taxon>Hexapoda</taxon>
        <taxon>Insecta</taxon>
        <taxon>Pterygota</taxon>
        <taxon>Neoptera</taxon>
        <taxon>Polyneoptera</taxon>
        <taxon>Dictyoptera</taxon>
        <taxon>Blattodea</taxon>
        <taxon>Blattoidea</taxon>
        <taxon>Blattidae</taxon>
        <taxon>Blattinae</taxon>
        <taxon>Periplaneta</taxon>
    </lineage>
</organism>
<protein>
    <recommendedName>
        <fullName evidence="1">Pyrokinin-5</fullName>
    </recommendedName>
    <alternativeName>
        <fullName evidence="1">FXPRL-amide</fullName>
    </alternativeName>
    <alternativeName>
        <fullName evidence="4">SheLa-Capa-PK</fullName>
    </alternativeName>
</protein>
<proteinExistence type="evidence at protein level"/>
<name>PPK5_SHELA</name>
<keyword id="KW-0027">Amidation</keyword>
<keyword id="KW-0903">Direct protein sequencing</keyword>
<keyword id="KW-0527">Neuropeptide</keyword>
<keyword id="KW-0964">Secreted</keyword>
<sequence length="17" mass="1653">GGGGSGETSGMWFGPRL</sequence>
<comment type="function">
    <text evidence="1">Myoactive.</text>
</comment>
<comment type="subcellular location">
    <subcellularLocation>
        <location evidence="5">Secreted</location>
    </subcellularLocation>
</comment>
<comment type="similarity">
    <text evidence="2">Belongs to the pyrokinin family.</text>
</comment>
<dbReference type="GO" id="GO:0005576">
    <property type="term" value="C:extracellular region"/>
    <property type="evidence" value="ECO:0007669"/>
    <property type="project" value="UniProtKB-SubCell"/>
</dbReference>
<dbReference type="GO" id="GO:0005184">
    <property type="term" value="F:neuropeptide hormone activity"/>
    <property type="evidence" value="ECO:0007669"/>
    <property type="project" value="InterPro"/>
</dbReference>
<dbReference type="GO" id="GO:0007218">
    <property type="term" value="P:neuropeptide signaling pathway"/>
    <property type="evidence" value="ECO:0007669"/>
    <property type="project" value="UniProtKB-KW"/>
</dbReference>
<dbReference type="InterPro" id="IPR001484">
    <property type="entry name" value="Pyrokinin_CS"/>
</dbReference>
<dbReference type="PROSITE" id="PS00539">
    <property type="entry name" value="PYROKININ"/>
    <property type="match status" value="1"/>
</dbReference>
<evidence type="ECO:0000250" key="1">
    <source>
        <dbReference type="UniProtKB" id="P82617"/>
    </source>
</evidence>
<evidence type="ECO:0000255" key="2"/>
<evidence type="ECO:0000269" key="3">
    <source>
    </source>
</evidence>
<evidence type="ECO:0000303" key="4">
    <source>
    </source>
</evidence>
<evidence type="ECO:0000305" key="5"/>
<feature type="peptide" id="PRO_0000378723" description="Pyrokinin-5" evidence="3">
    <location>
        <begin position="1"/>
        <end position="17"/>
    </location>
</feature>
<feature type="modified residue" description="Leucine amide" evidence="3">
    <location>
        <position position="17"/>
    </location>
</feature>
<reference evidence="5" key="1">
    <citation type="journal article" date="2009" name="BMC Evol. Biol.">
        <title>A proteomic approach for studying insect phylogeny: CAPA peptides of ancient insect taxa (Dictyoptera, Blattoptera) as a test case.</title>
        <authorList>
            <person name="Roth S."/>
            <person name="Fromm B."/>
            <person name="Gaede G."/>
            <person name="Predel R."/>
        </authorList>
    </citation>
    <scope>PROTEIN SEQUENCE</scope>
    <scope>AMIDATION AT LEU-17</scope>
    <source>
        <tissue evidence="3">Abdominal perisympathetic organs</tissue>
    </source>
</reference>